<name>LRP1B_HUMAN</name>
<keyword id="KW-0106">Calcium</keyword>
<keyword id="KW-1015">Disulfide bond</keyword>
<keyword id="KW-0245">EGF-like domain</keyword>
<keyword id="KW-0254">Endocytosis</keyword>
<keyword id="KW-0325">Glycoprotein</keyword>
<keyword id="KW-0472">Membrane</keyword>
<keyword id="KW-1267">Proteomics identification</keyword>
<keyword id="KW-0675">Receptor</keyword>
<keyword id="KW-1185">Reference proteome</keyword>
<keyword id="KW-0677">Repeat</keyword>
<keyword id="KW-0732">Signal</keyword>
<keyword id="KW-0812">Transmembrane</keyword>
<keyword id="KW-1133">Transmembrane helix</keyword>
<comment type="function">
    <text>Potential cell surface proteins that bind and internalize ligands in the process of receptor-mediated endocytosis.</text>
</comment>
<comment type="subunit">
    <text>Binds LRPAP1, PLAU, PLAT and SERPINE1; binding is followed by internalization and degradation of the ligands.</text>
</comment>
<comment type="interaction">
    <interactant intactId="EBI-1642131">
        <id>Q9NZR2</id>
    </interactant>
    <interactant intactId="EBI-77613">
        <id>P05067</id>
        <label>APP</label>
    </interactant>
    <organismsDiffer>false</organismsDiffer>
    <experiments>3</experiments>
</comment>
<comment type="interaction">
    <interactant intactId="EBI-1642131">
        <id>Q9NZR2</id>
    </interactant>
    <interactant intactId="EBI-7132379">
        <id>P43681</id>
        <label>CHRNA4</label>
    </interactant>
    <organismsDiffer>false</organismsDiffer>
    <experiments>3</experiments>
</comment>
<comment type="interaction">
    <interactant intactId="EBI-1642131">
        <id>Q9NZR2</id>
    </interactant>
    <interactant intactId="EBI-1048931">
        <id>P63151</id>
        <label>PPP2R2A</label>
    </interactant>
    <organismsDiffer>false</organismsDiffer>
    <experiments>3</experiments>
</comment>
<comment type="subcellular location">
    <subcellularLocation>
        <location evidence="7">Membrane</location>
        <topology evidence="7">Single-pass type I membrane protein</topology>
    </subcellularLocation>
</comment>
<comment type="tissue specificity">
    <text evidence="6">Expressed in thyroid gland and in salivary gland, as well as in adult and fetal brain.</text>
</comment>
<comment type="miscellaneous">
    <text>The gene is preferentially inactivated in one histological type of lung cancer (non-small cell lung cancer (NSCLC)). May thus play an important role in tumorigenesis of NSCLCs.</text>
</comment>
<comment type="similarity">
    <text evidence="7">Belongs to the LDLR family.</text>
</comment>
<organism>
    <name type="scientific">Homo sapiens</name>
    <name type="common">Human</name>
    <dbReference type="NCBI Taxonomy" id="9606"/>
    <lineage>
        <taxon>Eukaryota</taxon>
        <taxon>Metazoa</taxon>
        <taxon>Chordata</taxon>
        <taxon>Craniata</taxon>
        <taxon>Vertebrata</taxon>
        <taxon>Euteleostomi</taxon>
        <taxon>Mammalia</taxon>
        <taxon>Eutheria</taxon>
        <taxon>Euarchontoglires</taxon>
        <taxon>Primates</taxon>
        <taxon>Haplorrhini</taxon>
        <taxon>Catarrhini</taxon>
        <taxon>Hominidae</taxon>
        <taxon>Homo</taxon>
    </lineage>
</organism>
<feature type="signal peptide" evidence="2">
    <location>
        <begin position="1"/>
        <end position="20"/>
    </location>
</feature>
<feature type="chain" id="PRO_0000017319" description="Low-density lipoprotein receptor-related protein 1B">
    <location>
        <begin position="21"/>
        <end position="4599"/>
    </location>
</feature>
<feature type="topological domain" description="Extracellular" evidence="2">
    <location>
        <begin position="25"/>
        <end position="4444"/>
    </location>
</feature>
<feature type="transmembrane region" description="Helical" evidence="2">
    <location>
        <begin position="4445"/>
        <end position="4467"/>
    </location>
</feature>
<feature type="topological domain" description="Cytoplasmic" evidence="2">
    <location>
        <begin position="4468"/>
        <end position="4599"/>
    </location>
</feature>
<feature type="domain" description="LDL-receptor class A 1" evidence="4">
    <location>
        <begin position="31"/>
        <end position="70"/>
    </location>
</feature>
<feature type="domain" description="LDL-receptor class A 2" evidence="4">
    <location>
        <begin position="76"/>
        <end position="114"/>
    </location>
</feature>
<feature type="domain" description="EGF-like 1" evidence="3">
    <location>
        <begin position="116"/>
        <end position="154"/>
    </location>
</feature>
<feature type="domain" description="EGF-like 2; calcium-binding" evidence="3">
    <location>
        <begin position="155"/>
        <end position="194"/>
    </location>
</feature>
<feature type="repeat" description="LDL-receptor class B 1">
    <location>
        <begin position="295"/>
        <end position="337"/>
    </location>
</feature>
<feature type="repeat" description="LDL-receptor class B 2">
    <location>
        <begin position="338"/>
        <end position="381"/>
    </location>
</feature>
<feature type="repeat" description="LDL-receptor class B 3">
    <location>
        <begin position="382"/>
        <end position="425"/>
    </location>
</feature>
<feature type="domain" description="EGF-like 3" evidence="3">
    <location>
        <begin position="471"/>
        <end position="517"/>
    </location>
</feature>
<feature type="repeat" description="LDL-receptor class B 4">
    <location>
        <begin position="568"/>
        <end position="610"/>
    </location>
</feature>
<feature type="repeat" description="LDL-receptor class B 5">
    <location>
        <begin position="611"/>
        <end position="656"/>
    </location>
</feature>
<feature type="repeat" description="LDL-receptor class B 6">
    <location>
        <begin position="657"/>
        <end position="706"/>
    </location>
</feature>
<feature type="repeat" description="LDL-receptor class B 7">
    <location>
        <begin position="707"/>
        <end position="750"/>
    </location>
</feature>
<feature type="domain" description="EGF-like 4" evidence="3">
    <location>
        <begin position="794"/>
        <end position="834"/>
    </location>
</feature>
<feature type="domain" description="LDL-receptor class A 3" evidence="4">
    <location>
        <begin position="844"/>
        <end position="882"/>
    </location>
</feature>
<feature type="domain" description="LDL-receptor class A 4" evidence="4">
    <location>
        <begin position="885"/>
        <end position="923"/>
    </location>
</feature>
<feature type="domain" description="LDL-receptor class A 5" evidence="4">
    <location>
        <begin position="926"/>
        <end position="963"/>
    </location>
</feature>
<feature type="domain" description="LDL-receptor class A 6" evidence="4">
    <location>
        <begin position="966"/>
        <end position="1003"/>
    </location>
</feature>
<feature type="domain" description="LDL-receptor class A 7" evidence="4">
    <location>
        <begin position="1005"/>
        <end position="1043"/>
    </location>
</feature>
<feature type="domain" description="LDL-receptor class A 8" evidence="4">
    <location>
        <begin position="1052"/>
        <end position="1089"/>
    </location>
</feature>
<feature type="domain" description="LDL-receptor class A 9" evidence="4">
    <location>
        <begin position="1094"/>
        <end position="1132"/>
    </location>
</feature>
<feature type="domain" description="LDL-receptor class A 10" evidence="4">
    <location>
        <begin position="1135"/>
        <end position="1174"/>
    </location>
</feature>
<feature type="domain" description="EGF-like 5" evidence="3">
    <location>
        <begin position="1174"/>
        <end position="1213"/>
    </location>
</feature>
<feature type="domain" description="EGF-like 6" evidence="3">
    <location>
        <begin position="1214"/>
        <end position="1253"/>
    </location>
</feature>
<feature type="repeat" description="LDL-receptor class B 8">
    <location>
        <begin position="1300"/>
        <end position="1346"/>
    </location>
</feature>
<feature type="repeat" description="LDL-receptor class B 9">
    <location>
        <begin position="1347"/>
        <end position="1389"/>
    </location>
</feature>
<feature type="repeat" description="LDL-receptor class B 10">
    <location>
        <begin position="1390"/>
        <end position="1436"/>
    </location>
</feature>
<feature type="repeat" description="LDL-receptor class B 11">
    <location>
        <begin position="1437"/>
        <end position="1480"/>
    </location>
</feature>
<feature type="repeat" description="LDL-receptor class B 12">
    <location>
        <begin position="1481"/>
        <end position="1522"/>
    </location>
</feature>
<feature type="domain" description="EGF-like 7" evidence="3">
    <location>
        <begin position="1527"/>
        <end position="1570"/>
    </location>
</feature>
<feature type="repeat" description="LDL-receptor class B 13">
    <location>
        <begin position="1618"/>
        <end position="1660"/>
    </location>
</feature>
<feature type="repeat" description="LDL-receptor class B 14">
    <location>
        <begin position="1661"/>
        <end position="1704"/>
    </location>
</feature>
<feature type="repeat" description="LDL-receptor class B 15">
    <location>
        <begin position="1705"/>
        <end position="1744"/>
    </location>
</feature>
<feature type="repeat" description="LDL-receptor class B 16">
    <location>
        <begin position="1745"/>
        <end position="1787"/>
    </location>
</feature>
<feature type="domain" description="EGF-like 8" evidence="3">
    <location>
        <begin position="1834"/>
        <end position="1875"/>
    </location>
</feature>
<feature type="repeat" description="LDL-receptor class B 17">
    <location>
        <begin position="1922"/>
        <end position="1964"/>
    </location>
</feature>
<feature type="repeat" description="LDL-receptor class B 28">
    <location>
        <begin position="1965"/>
        <end position="2007"/>
    </location>
</feature>
<feature type="repeat" description="LDL-receptor class B 19">
    <location>
        <begin position="2008"/>
        <end position="2051"/>
    </location>
</feature>
<feature type="repeat" description="LDL-receptor class B 20">
    <location>
        <begin position="2052"/>
        <end position="2095"/>
    </location>
</feature>
<feature type="domain" description="EGF-like 9" evidence="3">
    <location>
        <begin position="2143"/>
        <end position="2183"/>
    </location>
</feature>
<feature type="repeat" description="LDL-receptor class B 21">
    <location>
        <begin position="2239"/>
        <end position="2280"/>
    </location>
</feature>
<feature type="repeat" description="LDL-receptor class B 22">
    <location>
        <begin position="2281"/>
        <end position="2329"/>
    </location>
</feature>
<feature type="repeat" description="LDL-receptor class B 23">
    <location>
        <begin position="2330"/>
        <end position="2374"/>
    </location>
</feature>
<feature type="repeat" description="LDL-receptor class B 24">
    <location>
        <begin position="2375"/>
        <end position="2416"/>
    </location>
</feature>
<feature type="repeat" description="LDL-receptor class B 25">
    <location>
        <begin position="2417"/>
        <end position="2459"/>
    </location>
</feature>
<feature type="domain" description="EGF-like 10" evidence="3">
    <location>
        <begin position="2464"/>
        <end position="2504"/>
    </location>
</feature>
<feature type="domain" description="LDL-receptor class A 11" evidence="4">
    <location>
        <begin position="2509"/>
        <end position="2548"/>
    </location>
</feature>
<feature type="domain" description="LDL-receptor class A 12" evidence="4">
    <location>
        <begin position="2551"/>
        <end position="2587"/>
    </location>
</feature>
<feature type="domain" description="LDL-receptor class A 13" evidence="4">
    <location>
        <begin position="2590"/>
        <end position="2626"/>
    </location>
</feature>
<feature type="domain" description="LDL-receptor class A 14" evidence="4">
    <location>
        <begin position="2629"/>
        <end position="2675"/>
    </location>
</feature>
<feature type="domain" description="LDL-receptor class A 15" evidence="4">
    <location>
        <begin position="2681"/>
        <end position="2717"/>
    </location>
</feature>
<feature type="domain" description="LDL-receptor class A 16" evidence="4">
    <location>
        <begin position="2719"/>
        <end position="2757"/>
    </location>
</feature>
<feature type="domain" description="LDL-receptor class A 17" evidence="4">
    <location>
        <begin position="2760"/>
        <end position="2800"/>
    </location>
</feature>
<feature type="domain" description="LDL-receptor class A 18" evidence="4">
    <location>
        <begin position="2804"/>
        <end position="2841"/>
    </location>
</feature>
<feature type="domain" description="LDL-receptor class A 19" evidence="4">
    <location>
        <begin position="2844"/>
        <end position="2885"/>
    </location>
</feature>
<feature type="domain" description="LDL-receptor class A 20" evidence="4">
    <location>
        <begin position="2890"/>
        <end position="2926"/>
    </location>
</feature>
<feature type="domain" description="EGF-like 11" evidence="3">
    <location>
        <begin position="2927"/>
        <end position="2967"/>
    </location>
</feature>
<feature type="domain" description="EGF-like 12; calcium-binding" evidence="3">
    <location>
        <begin position="2968"/>
        <end position="3008"/>
    </location>
</feature>
<feature type="repeat" description="LDL-receptor class B 26">
    <location>
        <begin position="3055"/>
        <end position="3098"/>
    </location>
</feature>
<feature type="repeat" description="LDL-receptor class B 27">
    <location>
        <begin position="3099"/>
        <end position="3141"/>
    </location>
</feature>
<feature type="repeat" description="LDL-receptor class B 28">
    <location>
        <begin position="3142"/>
        <end position="3185"/>
    </location>
</feature>
<feature type="repeat" description="LDL-receptor class B 29">
    <location>
        <begin position="3186"/>
        <end position="3224"/>
    </location>
</feature>
<feature type="repeat" description="LDL-receptor class B 30">
    <location>
        <begin position="3225"/>
        <end position="3268"/>
    </location>
</feature>
<feature type="domain" description="EGF-like 13" evidence="3">
    <location>
        <begin position="3273"/>
        <end position="3314"/>
    </location>
</feature>
<feature type="domain" description="LDL-receptor class A 21" evidence="4">
    <location>
        <begin position="3316"/>
        <end position="3353"/>
    </location>
</feature>
<feature type="domain" description="LDL-receptor class A 22" evidence="4">
    <location>
        <begin position="3356"/>
        <end position="3392"/>
    </location>
</feature>
<feature type="domain" description="LDL-receptor class A 23" evidence="4">
    <location>
        <begin position="3395"/>
        <end position="3432"/>
    </location>
</feature>
<feature type="domain" description="LDL-receptor class A 24" evidence="4">
    <location>
        <begin position="3435"/>
        <end position="3472"/>
    </location>
</feature>
<feature type="domain" description="LDL-receptor class A 25" evidence="4">
    <location>
        <begin position="3475"/>
        <end position="3511"/>
    </location>
</feature>
<feature type="domain" description="LDL-receptor class A 26" evidence="4">
    <location>
        <begin position="3514"/>
        <end position="3550"/>
    </location>
</feature>
<feature type="domain" description="LDL-receptor class A 27" evidence="4">
    <location>
        <begin position="3552"/>
        <end position="3588"/>
    </location>
</feature>
<feature type="domain" description="LDL-receptor class A 28" evidence="4">
    <location>
        <begin position="3593"/>
        <end position="3629"/>
    </location>
</feature>
<feature type="domain" description="LDL-receptor class A 29" evidence="4">
    <location>
        <begin position="3631"/>
        <end position="3668"/>
    </location>
</feature>
<feature type="domain" description="LDL-receptor class A 30" evidence="4">
    <location>
        <begin position="3673"/>
        <end position="3711"/>
    </location>
</feature>
<feature type="domain" description="LDL-receptor class A 31" evidence="4">
    <location>
        <begin position="3714"/>
        <end position="3752"/>
    </location>
</feature>
<feature type="domain" description="LDL-receptor class A 32" evidence="4">
    <location>
        <begin position="3761"/>
        <end position="3797"/>
    </location>
</feature>
<feature type="domain" description="EGF-like 14" evidence="3">
    <location>
        <begin position="3801"/>
        <end position="3843"/>
    </location>
</feature>
<feature type="domain" description="EGF-like 15" evidence="3">
    <location>
        <begin position="3844"/>
        <end position="3881"/>
    </location>
</feature>
<feature type="repeat" description="LDL-receptor class B 31">
    <location>
        <begin position="3933"/>
        <end position="3980"/>
    </location>
</feature>
<feature type="repeat" description="LDL-receptor class B 32">
    <location>
        <begin position="3981"/>
        <end position="4038"/>
    </location>
</feature>
<feature type="repeat" description="LDL-receptor class B 33">
    <location>
        <begin position="4039"/>
        <end position="4082"/>
    </location>
</feature>
<feature type="repeat" description="LDL-receptor class B 34">
    <location>
        <begin position="4083"/>
        <end position="4127"/>
    </location>
</feature>
<feature type="domain" description="EGF-like 16" evidence="3">
    <location>
        <begin position="4171"/>
        <end position="4208"/>
    </location>
</feature>
<feature type="domain" description="EGF-like 17" evidence="3">
    <location>
        <begin position="4213"/>
        <end position="4249"/>
    </location>
</feature>
<feature type="domain" description="EGF-like 18" evidence="3">
    <location>
        <begin position="4249"/>
        <end position="4285"/>
    </location>
</feature>
<feature type="domain" description="EGF-like 19" evidence="3">
    <location>
        <begin position="4285"/>
        <end position="4321"/>
    </location>
</feature>
<feature type="domain" description="EGF-like 20" evidence="3">
    <location>
        <begin position="4321"/>
        <end position="4357"/>
    </location>
</feature>
<feature type="domain" description="EGF-like 21" evidence="3">
    <location>
        <begin position="4357"/>
        <end position="4392"/>
    </location>
</feature>
<feature type="domain" description="EGF-like 22" evidence="3">
    <location>
        <begin position="4390"/>
        <end position="4427"/>
    </location>
</feature>
<feature type="short sequence motif" description="Endocytosis signal" evidence="2">
    <location>
        <begin position="4492"/>
        <end position="4495"/>
    </location>
</feature>
<feature type="short sequence motif" description="Endocytosis signal" evidence="2">
    <location>
        <begin position="4559"/>
        <end position="4562"/>
    </location>
</feature>
<feature type="glycosylation site" description="N-linked (GlcNAc...) asparagine" evidence="2">
    <location>
        <position position="134"/>
    </location>
</feature>
<feature type="glycosylation site" description="N-linked (GlcNAc...) asparagine" evidence="2">
    <location>
        <position position="190"/>
    </location>
</feature>
<feature type="glycosylation site" description="N-linked (GlcNAc...) asparagine" evidence="2">
    <location>
        <position position="220"/>
    </location>
</feature>
<feature type="glycosylation site" description="N-linked (GlcNAc...) asparagine" evidence="2">
    <location>
        <position position="313"/>
    </location>
</feature>
<feature type="glycosylation site" description="N-linked (GlcNAc...) asparagine" evidence="2">
    <location>
        <position position="360"/>
    </location>
</feature>
<feature type="glycosylation site" description="N-linked (GlcNAc...) asparagine" evidence="2">
    <location>
        <position position="443"/>
    </location>
</feature>
<feature type="glycosylation site" description="N-linked (GlcNAc...) asparagine" evidence="2">
    <location>
        <position position="725"/>
    </location>
</feature>
<feature type="glycosylation site" description="N-linked (GlcNAc...) asparagine" evidence="2">
    <location>
        <position position="758"/>
    </location>
</feature>
<feature type="glycosylation site" description="N-linked (GlcNAc...) asparagine" evidence="2">
    <location>
        <position position="829"/>
    </location>
</feature>
<feature type="glycosylation site" description="N-linked (GlcNAc...) asparagine" evidence="2">
    <location>
        <position position="883"/>
    </location>
</feature>
<feature type="glycosylation site" description="N-linked (GlcNAc...) asparagine" evidence="2">
    <location>
        <position position="919"/>
    </location>
</feature>
<feature type="glycosylation site" description="N-linked (GlcNAc...) asparagine" evidence="2">
    <location>
        <position position="1041"/>
    </location>
</feature>
<feature type="glycosylation site" description="N-linked (GlcNAc...) asparagine" evidence="2">
    <location>
        <position position="1089"/>
    </location>
</feature>
<feature type="glycosylation site" description="N-linked (GlcNAc...) asparagine" evidence="2">
    <location>
        <position position="1145"/>
    </location>
</feature>
<feature type="glycosylation site" description="N-linked (GlcNAc...) asparagine" evidence="2">
    <location>
        <position position="1209"/>
    </location>
</feature>
<feature type="glycosylation site" description="N-linked (GlcNAc...) asparagine" evidence="2">
    <location>
        <position position="1298"/>
    </location>
</feature>
<feature type="glycosylation site" description="N-linked (GlcNAc...) asparagine" evidence="2">
    <location>
        <position position="1502"/>
    </location>
</feature>
<feature type="glycosylation site" description="N-linked (GlcNAc...) asparagine" evidence="2">
    <location>
        <position position="1549"/>
    </location>
</feature>
<feature type="glycosylation site" description="N-linked (GlcNAc...) asparagine" evidence="2">
    <location>
        <position position="1636"/>
    </location>
</feature>
<feature type="glycosylation site" description="N-linked (GlcNAc...) asparagine" evidence="2">
    <location>
        <position position="1754"/>
    </location>
</feature>
<feature type="glycosylation site" description="N-linked (GlcNAc...) asparagine" evidence="2">
    <location>
        <position position="1816"/>
    </location>
</feature>
<feature type="glycosylation site" description="N-linked (GlcNAc...) asparagine" evidence="2">
    <location>
        <position position="1921"/>
    </location>
</feature>
<feature type="glycosylation site" description="N-linked (GlcNAc...) asparagine" evidence="2">
    <location>
        <position position="1983"/>
    </location>
</feature>
<feature type="glycosylation site" description="N-linked (GlcNAc...) asparagine" evidence="2">
    <location>
        <position position="2105"/>
    </location>
</feature>
<feature type="glycosylation site" description="N-linked (GlcNAc...) asparagine" evidence="2">
    <location>
        <position position="2458"/>
    </location>
</feature>
<feature type="glycosylation site" description="N-linked (GlcNAc...) asparagine" evidence="2">
    <location>
        <position position="2488"/>
    </location>
</feature>
<feature type="glycosylation site" description="N-linked (GlcNAc...) asparagine" evidence="2">
    <location>
        <position position="2507"/>
    </location>
</feature>
<feature type="glycosylation site" description="N-linked (GlcNAc...) asparagine" evidence="2">
    <location>
        <position position="2549"/>
    </location>
</feature>
<feature type="glycosylation site" description="N-linked (GlcNAc...) asparagine" evidence="2">
    <location>
        <position position="2626"/>
    </location>
</feature>
<feature type="glycosylation site" description="N-linked (GlcNAc...) asparagine" evidence="2">
    <location>
        <position position="2647"/>
    </location>
</feature>
<feature type="glycosylation site" description="N-linked (GlcNAc...) asparagine" evidence="2">
    <location>
        <position position="2802"/>
    </location>
</feature>
<feature type="glycosylation site" description="N-linked (GlcNAc...) asparagine" evidence="2">
    <location>
        <position position="2892"/>
    </location>
</feature>
<feature type="glycosylation site" description="N-linked (GlcNAc...) asparagine" evidence="2">
    <location>
        <position position="3034"/>
    </location>
</feature>
<feature type="glycosylation site" description="N-linked (GlcNAc...) asparagine" evidence="2">
    <location>
        <position position="3066"/>
    </location>
</feature>
<feature type="glycosylation site" description="N-linked (GlcNAc...) asparagine" evidence="2">
    <location>
        <position position="3076"/>
    </location>
</feature>
<feature type="glycosylation site" description="N-linked (GlcNAc...) asparagine" evidence="2">
    <location>
        <position position="3164"/>
    </location>
</feature>
<feature type="glycosylation site" description="N-linked (GlcNAc...) asparagine" evidence="2">
    <location>
        <position position="3310"/>
    </location>
</feature>
<feature type="glycosylation site" description="N-linked (GlcNAc...) asparagine" evidence="2">
    <location>
        <position position="3316"/>
    </location>
</feature>
<feature type="glycosylation site" description="N-linked (GlcNAc...) asparagine" evidence="2">
    <location>
        <position position="3682"/>
    </location>
</feature>
<feature type="glycosylation site" description="N-linked (GlcNAc...) asparagine" evidence="2">
    <location>
        <position position="3877"/>
    </location>
</feature>
<feature type="glycosylation site" description="N-linked (GlcNAc...) asparagine" evidence="2">
    <location>
        <position position="3894"/>
    </location>
</feature>
<feature type="glycosylation site" description="N-linked (GlcNAc...) asparagine" evidence="2">
    <location>
        <position position="3906"/>
    </location>
</feature>
<feature type="glycosylation site" description="N-linked (GlcNAc...) asparagine" evidence="2">
    <location>
        <position position="4017"/>
    </location>
</feature>
<feature type="glycosylation site" description="N-linked (GlcNAc...) asparagine" evidence="2">
    <location>
        <position position="4204"/>
    </location>
</feature>
<feature type="glycosylation site" description="N-linked (GlcNAc...) asparagine" evidence="2">
    <location>
        <position position="4381"/>
    </location>
</feature>
<feature type="glycosylation site" description="N-linked (GlcNAc...) asparagine" evidence="2">
    <location>
        <position position="4420"/>
    </location>
</feature>
<feature type="disulfide bond" evidence="1">
    <location>
        <begin position="32"/>
        <end position="45"/>
    </location>
</feature>
<feature type="disulfide bond" evidence="1">
    <location>
        <begin position="39"/>
        <end position="58"/>
    </location>
</feature>
<feature type="disulfide bond" evidence="1">
    <location>
        <begin position="52"/>
        <end position="69"/>
    </location>
</feature>
<feature type="disulfide bond" evidence="1">
    <location>
        <begin position="77"/>
        <end position="90"/>
    </location>
</feature>
<feature type="disulfide bond" evidence="1">
    <location>
        <begin position="84"/>
        <end position="103"/>
    </location>
</feature>
<feature type="disulfide bond" evidence="1">
    <location>
        <begin position="97"/>
        <end position="113"/>
    </location>
</feature>
<feature type="disulfide bond" evidence="1">
    <location>
        <begin position="120"/>
        <end position="129"/>
    </location>
</feature>
<feature type="disulfide bond" evidence="1">
    <location>
        <begin position="125"/>
        <end position="138"/>
    </location>
</feature>
<feature type="disulfide bond" evidence="1">
    <location>
        <begin position="140"/>
        <end position="153"/>
    </location>
</feature>
<feature type="disulfide bond" evidence="1">
    <location>
        <begin position="159"/>
        <end position="169"/>
    </location>
</feature>
<feature type="disulfide bond" evidence="1">
    <location>
        <begin position="165"/>
        <end position="178"/>
    </location>
</feature>
<feature type="disulfide bond" evidence="1">
    <location>
        <begin position="180"/>
        <end position="193"/>
    </location>
</feature>
<feature type="disulfide bond" evidence="1">
    <location>
        <begin position="798"/>
        <end position="809"/>
    </location>
</feature>
<feature type="disulfide bond" evidence="1">
    <location>
        <begin position="805"/>
        <end position="818"/>
    </location>
</feature>
<feature type="disulfide bond" evidence="1">
    <location>
        <begin position="820"/>
        <end position="833"/>
    </location>
</feature>
<feature type="disulfide bond" evidence="1">
    <location>
        <begin position="845"/>
        <end position="857"/>
    </location>
</feature>
<feature type="disulfide bond" evidence="1">
    <location>
        <begin position="852"/>
        <end position="870"/>
    </location>
</feature>
<feature type="disulfide bond" evidence="1">
    <location>
        <begin position="864"/>
        <end position="881"/>
    </location>
</feature>
<feature type="disulfide bond" evidence="1">
    <location>
        <begin position="886"/>
        <end position="898"/>
    </location>
</feature>
<feature type="disulfide bond" evidence="1">
    <location>
        <begin position="893"/>
        <end position="911"/>
    </location>
</feature>
<feature type="disulfide bond" evidence="1">
    <location>
        <begin position="905"/>
        <end position="922"/>
    </location>
</feature>
<feature type="disulfide bond" evidence="1">
    <location>
        <begin position="927"/>
        <end position="939"/>
    </location>
</feature>
<feature type="disulfide bond" evidence="1">
    <location>
        <begin position="934"/>
        <end position="952"/>
    </location>
</feature>
<feature type="disulfide bond" evidence="1">
    <location>
        <begin position="946"/>
        <end position="962"/>
    </location>
</feature>
<feature type="disulfide bond" evidence="1">
    <location>
        <begin position="967"/>
        <end position="980"/>
    </location>
</feature>
<feature type="disulfide bond" evidence="1">
    <location>
        <begin position="975"/>
        <end position="993"/>
    </location>
</feature>
<feature type="disulfide bond" evidence="1">
    <location>
        <begin position="987"/>
        <end position="1002"/>
    </location>
</feature>
<feature type="disulfide bond" evidence="1">
    <location>
        <begin position="1006"/>
        <end position="1018"/>
    </location>
</feature>
<feature type="disulfide bond" evidence="1">
    <location>
        <begin position="1013"/>
        <end position="1031"/>
    </location>
</feature>
<feature type="disulfide bond" evidence="1">
    <location>
        <begin position="1025"/>
        <end position="1042"/>
    </location>
</feature>
<feature type="disulfide bond" evidence="1">
    <location>
        <begin position="1053"/>
        <end position="1066"/>
    </location>
</feature>
<feature type="disulfide bond" evidence="1">
    <location>
        <begin position="1060"/>
        <end position="1079"/>
    </location>
</feature>
<feature type="disulfide bond" evidence="1">
    <location>
        <begin position="1073"/>
        <end position="1088"/>
    </location>
</feature>
<feature type="disulfide bond" evidence="1">
    <location>
        <begin position="1095"/>
        <end position="1109"/>
    </location>
</feature>
<feature type="disulfide bond" evidence="1">
    <location>
        <begin position="1103"/>
        <end position="1122"/>
    </location>
</feature>
<feature type="disulfide bond" evidence="1">
    <location>
        <begin position="1116"/>
        <end position="1131"/>
    </location>
</feature>
<feature type="disulfide bond" evidence="1">
    <location>
        <begin position="1136"/>
        <end position="1150"/>
    </location>
</feature>
<feature type="disulfide bond" evidence="1">
    <location>
        <begin position="1143"/>
        <end position="1163"/>
    </location>
</feature>
<feature type="disulfide bond" evidence="1">
    <location>
        <begin position="1157"/>
        <end position="1173"/>
    </location>
</feature>
<feature type="disulfide bond" evidence="1">
    <location>
        <begin position="1838"/>
        <end position="1849"/>
    </location>
</feature>
<feature type="disulfide bond" evidence="1">
    <location>
        <begin position="1845"/>
        <end position="1859"/>
    </location>
</feature>
<feature type="disulfide bond" evidence="1">
    <location>
        <begin position="1861"/>
        <end position="1874"/>
    </location>
</feature>
<feature type="disulfide bond" evidence="1">
    <location>
        <begin position="2147"/>
        <end position="2158"/>
    </location>
</feature>
<feature type="disulfide bond" evidence="1">
    <location>
        <begin position="2154"/>
        <end position="2168"/>
    </location>
</feature>
<feature type="disulfide bond" evidence="1">
    <location>
        <begin position="2170"/>
        <end position="2182"/>
    </location>
</feature>
<feature type="disulfide bond" evidence="1">
    <location>
        <begin position="2510"/>
        <end position="2523"/>
    </location>
</feature>
<feature type="disulfide bond" evidence="1">
    <location>
        <begin position="2518"/>
        <end position="2536"/>
    </location>
</feature>
<feature type="disulfide bond" evidence="1">
    <location>
        <begin position="2530"/>
        <end position="2547"/>
    </location>
</feature>
<feature type="disulfide bond" evidence="1">
    <location>
        <begin position="2552"/>
        <end position="2564"/>
    </location>
</feature>
<feature type="disulfide bond" evidence="1">
    <location>
        <begin position="2559"/>
        <end position="2577"/>
    </location>
</feature>
<feature type="disulfide bond" evidence="1">
    <location>
        <begin position="2571"/>
        <end position="2586"/>
    </location>
</feature>
<feature type="disulfide bond" evidence="1">
    <location>
        <begin position="2591"/>
        <end position="2603"/>
    </location>
</feature>
<feature type="disulfide bond" evidence="1">
    <location>
        <begin position="2598"/>
        <end position="2616"/>
    </location>
</feature>
<feature type="disulfide bond" evidence="1">
    <location>
        <begin position="2610"/>
        <end position="2625"/>
    </location>
</feature>
<feature type="disulfide bond" evidence="1">
    <location>
        <begin position="2630"/>
        <end position="2652"/>
    </location>
</feature>
<feature type="disulfide bond" evidence="1">
    <location>
        <begin position="2646"/>
        <end position="2665"/>
    </location>
</feature>
<feature type="disulfide bond" evidence="1">
    <location>
        <begin position="2659"/>
        <end position="2674"/>
    </location>
</feature>
<feature type="disulfide bond" evidence="1">
    <location>
        <begin position="2682"/>
        <end position="2694"/>
    </location>
</feature>
<feature type="disulfide bond" evidence="1">
    <location>
        <begin position="2689"/>
        <end position="2707"/>
    </location>
</feature>
<feature type="disulfide bond" evidence="1">
    <location>
        <begin position="2701"/>
        <end position="2716"/>
    </location>
</feature>
<feature type="disulfide bond" evidence="1">
    <location>
        <begin position="2720"/>
        <end position="2732"/>
    </location>
</feature>
<feature type="disulfide bond" evidence="1">
    <location>
        <begin position="2727"/>
        <end position="2745"/>
    </location>
</feature>
<feature type="disulfide bond" evidence="1">
    <location>
        <begin position="2739"/>
        <end position="2756"/>
    </location>
</feature>
<feature type="disulfide bond" evidence="1">
    <location>
        <begin position="2761"/>
        <end position="2774"/>
    </location>
</feature>
<feature type="disulfide bond" evidence="1">
    <location>
        <begin position="2768"/>
        <end position="2787"/>
    </location>
</feature>
<feature type="disulfide bond" evidence="1">
    <location>
        <begin position="2781"/>
        <end position="2799"/>
    </location>
</feature>
<feature type="disulfide bond" evidence="1">
    <location>
        <begin position="2805"/>
        <end position="2817"/>
    </location>
</feature>
<feature type="disulfide bond" evidence="1">
    <location>
        <begin position="2812"/>
        <end position="2830"/>
    </location>
</feature>
<feature type="disulfide bond" evidence="1">
    <location>
        <begin position="2824"/>
        <end position="2840"/>
    </location>
</feature>
<feature type="disulfide bond" evidence="1">
    <location>
        <begin position="2845"/>
        <end position="2857"/>
    </location>
</feature>
<feature type="disulfide bond" evidence="1">
    <location>
        <begin position="2852"/>
        <end position="2871"/>
    </location>
</feature>
<feature type="disulfide bond" evidence="1">
    <location>
        <begin position="2865"/>
        <end position="2884"/>
    </location>
</feature>
<feature type="disulfide bond" evidence="1">
    <location>
        <begin position="2891"/>
        <end position="2903"/>
    </location>
</feature>
<feature type="disulfide bond" evidence="1">
    <location>
        <begin position="2898"/>
        <end position="2916"/>
    </location>
</feature>
<feature type="disulfide bond" evidence="1">
    <location>
        <begin position="2910"/>
        <end position="2925"/>
    </location>
</feature>
<feature type="disulfide bond" evidence="1">
    <location>
        <begin position="2930"/>
        <end position="2942"/>
    </location>
</feature>
<feature type="disulfide bond" evidence="1">
    <location>
        <begin position="2938"/>
        <end position="2951"/>
    </location>
</feature>
<feature type="disulfide bond" evidence="1">
    <location>
        <begin position="2953"/>
        <end position="2966"/>
    </location>
</feature>
<feature type="disulfide bond" evidence="1">
    <location>
        <begin position="2972"/>
        <end position="2982"/>
    </location>
</feature>
<feature type="disulfide bond" evidence="1">
    <location>
        <begin position="2978"/>
        <end position="2991"/>
    </location>
</feature>
<feature type="disulfide bond" evidence="1">
    <location>
        <begin position="2993"/>
        <end position="3007"/>
    </location>
</feature>
<feature type="disulfide bond" evidence="1">
    <location>
        <begin position="3317"/>
        <end position="3329"/>
    </location>
</feature>
<feature type="disulfide bond" evidence="1">
    <location>
        <begin position="3324"/>
        <end position="3342"/>
    </location>
</feature>
<feature type="disulfide bond" evidence="1">
    <location>
        <begin position="3336"/>
        <end position="3352"/>
    </location>
</feature>
<feature type="disulfide bond" evidence="1">
    <location>
        <begin position="3357"/>
        <end position="3369"/>
    </location>
</feature>
<feature type="disulfide bond" evidence="1">
    <location>
        <begin position="3364"/>
        <end position="3382"/>
    </location>
</feature>
<feature type="disulfide bond" evidence="1">
    <location>
        <begin position="3376"/>
        <end position="3391"/>
    </location>
</feature>
<feature type="disulfide bond" evidence="1">
    <location>
        <begin position="3396"/>
        <end position="3409"/>
    </location>
</feature>
<feature type="disulfide bond" evidence="1">
    <location>
        <begin position="3403"/>
        <end position="3422"/>
    </location>
</feature>
<feature type="disulfide bond" evidence="1">
    <location>
        <begin position="3416"/>
        <end position="3431"/>
    </location>
</feature>
<feature type="disulfide bond" evidence="1">
    <location>
        <begin position="3436"/>
        <end position="3449"/>
    </location>
</feature>
<feature type="disulfide bond" evidence="1">
    <location>
        <begin position="3443"/>
        <end position="3462"/>
    </location>
</feature>
<feature type="disulfide bond" evidence="1">
    <location>
        <begin position="3456"/>
        <end position="3471"/>
    </location>
</feature>
<feature type="disulfide bond" evidence="1">
    <location>
        <begin position="3476"/>
        <end position="3488"/>
    </location>
</feature>
<feature type="disulfide bond" evidence="1">
    <location>
        <begin position="3483"/>
        <end position="3501"/>
    </location>
</feature>
<feature type="disulfide bond" evidence="1">
    <location>
        <begin position="3495"/>
        <end position="3510"/>
    </location>
</feature>
<feature type="disulfide bond" evidence="1">
    <location>
        <begin position="3515"/>
        <end position="3527"/>
    </location>
</feature>
<feature type="disulfide bond" evidence="1">
    <location>
        <begin position="3522"/>
        <end position="3540"/>
    </location>
</feature>
<feature type="disulfide bond" evidence="1">
    <location>
        <begin position="3534"/>
        <end position="3549"/>
    </location>
</feature>
<feature type="disulfide bond" evidence="1">
    <location>
        <begin position="3553"/>
        <end position="3565"/>
    </location>
</feature>
<feature type="disulfide bond" evidence="1">
    <location>
        <begin position="3560"/>
        <end position="3578"/>
    </location>
</feature>
<feature type="disulfide bond" evidence="1">
    <location>
        <begin position="3572"/>
        <end position="3587"/>
    </location>
</feature>
<feature type="disulfide bond" evidence="1">
    <location>
        <begin position="3594"/>
        <end position="3606"/>
    </location>
</feature>
<feature type="disulfide bond" evidence="1">
    <location>
        <begin position="3601"/>
        <end position="3619"/>
    </location>
</feature>
<feature type="disulfide bond" evidence="1">
    <location>
        <begin position="3613"/>
        <end position="3628"/>
    </location>
</feature>
<feature type="disulfide bond" evidence="1">
    <location>
        <begin position="3632"/>
        <end position="3645"/>
    </location>
</feature>
<feature type="disulfide bond" evidence="1">
    <location>
        <begin position="3639"/>
        <end position="3658"/>
    </location>
</feature>
<feature type="disulfide bond" evidence="1">
    <location>
        <begin position="3652"/>
        <end position="3667"/>
    </location>
</feature>
<feature type="disulfide bond" evidence="1">
    <location>
        <begin position="3674"/>
        <end position="3686"/>
    </location>
</feature>
<feature type="disulfide bond" evidence="1">
    <location>
        <begin position="3681"/>
        <end position="3699"/>
    </location>
</feature>
<feature type="disulfide bond" evidence="1">
    <location>
        <begin position="3693"/>
        <end position="3710"/>
    </location>
</feature>
<feature type="disulfide bond" evidence="1">
    <location>
        <begin position="3715"/>
        <end position="3729"/>
    </location>
</feature>
<feature type="disulfide bond" evidence="1">
    <location>
        <begin position="3723"/>
        <end position="3742"/>
    </location>
</feature>
<feature type="disulfide bond" evidence="1">
    <location>
        <begin position="3736"/>
        <end position="3751"/>
    </location>
</feature>
<feature type="disulfide bond" evidence="1">
    <location>
        <begin position="3762"/>
        <end position="3774"/>
    </location>
</feature>
<feature type="disulfide bond" evidence="1">
    <location>
        <begin position="3769"/>
        <end position="3787"/>
    </location>
</feature>
<feature type="disulfide bond" evidence="1">
    <location>
        <begin position="3781"/>
        <end position="3796"/>
    </location>
</feature>
<feature type="disulfide bond" evidence="1">
    <location>
        <begin position="3805"/>
        <end position="3818"/>
    </location>
</feature>
<feature type="disulfide bond" evidence="1">
    <location>
        <begin position="3812"/>
        <end position="3827"/>
    </location>
</feature>
<feature type="disulfide bond" evidence="1">
    <location>
        <begin position="3829"/>
        <end position="3842"/>
    </location>
</feature>
<feature type="disulfide bond" evidence="1">
    <location>
        <begin position="3848"/>
        <end position="3858"/>
    </location>
</feature>
<feature type="disulfide bond" evidence="1">
    <location>
        <begin position="3854"/>
        <end position="3867"/>
    </location>
</feature>
<feature type="disulfide bond" evidence="1">
    <location>
        <begin position="3869"/>
        <end position="3880"/>
    </location>
</feature>
<feature type="disulfide bond" evidence="1">
    <location>
        <begin position="4217"/>
        <end position="4227"/>
    </location>
</feature>
<feature type="disulfide bond" evidence="1">
    <location>
        <begin position="4221"/>
        <end position="4237"/>
    </location>
</feature>
<feature type="disulfide bond" evidence="1">
    <location>
        <begin position="4253"/>
        <end position="4263"/>
    </location>
</feature>
<feature type="disulfide bond" evidence="1">
    <location>
        <begin position="4257"/>
        <end position="4273"/>
    </location>
</feature>
<feature type="disulfide bond" evidence="1">
    <location>
        <begin position="4275"/>
        <end position="4284"/>
    </location>
</feature>
<feature type="disulfide bond" evidence="1">
    <location>
        <begin position="4289"/>
        <end position="4299"/>
    </location>
</feature>
<feature type="disulfide bond" evidence="1">
    <location>
        <begin position="4293"/>
        <end position="4309"/>
    </location>
</feature>
<feature type="disulfide bond" evidence="1">
    <location>
        <begin position="4311"/>
        <end position="4320"/>
    </location>
</feature>
<feature type="disulfide bond" evidence="1">
    <location>
        <begin position="4325"/>
        <end position="4335"/>
    </location>
</feature>
<feature type="disulfide bond" evidence="1">
    <location>
        <begin position="4329"/>
        <end position="4345"/>
    </location>
</feature>
<feature type="disulfide bond" evidence="1">
    <location>
        <begin position="4347"/>
        <end position="4356"/>
    </location>
</feature>
<feature type="disulfide bond" evidence="1">
    <location>
        <begin position="4394"/>
        <end position="4404"/>
    </location>
</feature>
<feature type="disulfide bond" evidence="1">
    <location>
        <begin position="4398"/>
        <end position="4415"/>
    </location>
</feature>
<feature type="disulfide bond" evidence="1">
    <location>
        <begin position="4417"/>
        <end position="4426"/>
    </location>
</feature>
<feature type="sequence variant" id="VAR_049759" description="In dbSNP:rs12990449.">
    <original>Q</original>
    <variation>R</variation>
    <location>
        <position position="48"/>
    </location>
</feature>
<feature type="sequence variant" id="VAR_049760" description="In dbSNP:rs34488772.">
    <original>Q</original>
    <variation>R</variation>
    <location>
        <position position="3140"/>
    </location>
</feature>
<feature type="sequence variant" id="VAR_018328" description="In NSCLC cells; dbSNP:rs371536401." evidence="5">
    <original>R</original>
    <variation>C</variation>
    <location>
        <position position="3157"/>
    </location>
</feature>
<feature type="sequence variant" id="VAR_049761" description="In dbSNP:rs1878740.">
    <original>E</original>
    <variation>K</variation>
    <location>
        <position position="3458"/>
    </location>
</feature>
<feature type="sequence variant" id="VAR_049762" description="In dbSNP:rs35546150.">
    <original>Q</original>
    <variation>K</variation>
    <location>
        <position position="3734"/>
    </location>
</feature>
<feature type="sequence variant" id="VAR_049763" description="In dbSNP:rs17386226.">
    <original>V</original>
    <variation>L</variation>
    <location>
        <position position="4264"/>
    </location>
</feature>
<feature type="sequence conflict" description="In Ref. 2; AAL38107." evidence="7" ref="2">
    <original>C</original>
    <variation>Y</variation>
    <location>
        <position position="516"/>
    </location>
</feature>
<feature type="sequence conflict" description="In Ref. 2; AAL38108." evidence="7" ref="2">
    <original>P</original>
    <variation>S</variation>
    <location>
        <position position="1257"/>
    </location>
</feature>
<feature type="sequence conflict" description="In Ref. 2; AAL38108." evidence="7" ref="2">
    <original>E</original>
    <variation>G</variation>
    <location>
        <position position="1571"/>
    </location>
</feature>
<feature type="sequence conflict" description="In Ref. 2; AAL38108." evidence="7" ref="2">
    <original>LP</original>
    <variation>CQ</variation>
    <location>
        <begin position="2654"/>
        <end position="2655"/>
    </location>
</feature>
<evidence type="ECO:0000250" key="1"/>
<evidence type="ECO:0000255" key="2"/>
<evidence type="ECO:0000255" key="3">
    <source>
        <dbReference type="PROSITE-ProRule" id="PRU00076"/>
    </source>
</evidence>
<evidence type="ECO:0000255" key="4">
    <source>
        <dbReference type="PROSITE-ProRule" id="PRU00124"/>
    </source>
</evidence>
<evidence type="ECO:0000269" key="5">
    <source>
    </source>
</evidence>
<evidence type="ECO:0000269" key="6">
    <source>
    </source>
</evidence>
<evidence type="ECO:0000305" key="7"/>
<gene>
    <name type="primary">LRP1B</name>
    <name type="synonym">LRPDIT</name>
</gene>
<accession>Q9NZR2</accession>
<accession>Q8WY29</accession>
<accession>Q8WY30</accession>
<accession>Q8WY31</accession>
<reference key="1">
    <citation type="journal article" date="2000" name="Cancer Res.">
        <title>LRP-DIT, a putative endocytic receptor gene, is frequently inactivated in non-small cell lung cancer cell lines.</title>
        <authorList>
            <person name="Liu C.-X."/>
            <person name="Musco S."/>
            <person name="Lisitsina N.M."/>
            <person name="Forgacs E."/>
            <person name="Minna J.D."/>
            <person name="Lisitsyn N.A."/>
        </authorList>
    </citation>
    <scope>NUCLEOTIDE SEQUENCE [MRNA]</scope>
    <scope>VARIANT CYS-3157</scope>
    <source>
        <tissue>Lung cancer</tissue>
    </source>
</reference>
<reference key="2">
    <citation type="journal article" date="2000" name="Genomics">
        <title>Genomic organization of a new candidate tumor suppressor gene, LRP1B.</title>
        <authorList>
            <person name="Liu C.-X."/>
            <person name="Musco S."/>
            <person name="Lisitsina N.M."/>
            <person name="Yaklichkin S.Y."/>
            <person name="Lisitsyn N.A."/>
        </authorList>
    </citation>
    <scope>NUCLEOTIDE SEQUENCE [GENOMIC DNA] OF 1-2655 AND 2677-4213</scope>
</reference>
<reference key="3">
    <citation type="journal article" date="2001" name="J. Biol. Chem.">
        <title>The putative tumor suppressor LRP1B, a novel member of the low density lipoprotein (LDL) receptor family, exhibits both overlapping and distinct properties with the LDL receptor-related protein.</title>
        <authorList>
            <person name="Liu C.-X."/>
            <person name="Li Y."/>
            <person name="Obermoeller-McCormick L.M."/>
            <person name="Schwartz A.L."/>
            <person name="Bu G."/>
        </authorList>
    </citation>
    <scope>INTERACTION WITH LRPAP1; PLAU; PLAT AND SERPINE1</scope>
    <scope>TISSUE SPECIFICITY</scope>
</reference>
<sequence>MSEFLLALLTLSGLLPIARVLTVGADRDQQLCDPGEFLCHDHVTCVSQSWLCDGDPDCPDDSDESLDTCPEEVEIKCPLNHIACLGTNKCVHLSQLCNGVLDCPDGYDEGVHCQELLSNCQQLNCQYKCTMVRNSTRCYCEDGFEITEDGRSCKDQDECAVYGTCSQTCRNTHGSYTCSCVEGYLMQPDNRSCKAKIEPTDRPPILLIANFETIEVFYLNGSKMATLSSVNGNEIHTLDFIYNEDMICWIESRESSNQLKCIQITKAGGLTDEWTINILQSFHNVQQMAIDWLTRNLYFVDHVGDRIFVCNSNGSVCVTLIDLELHNPKAIAVDPIAGKLFFTDYGNVAKVERCDMDGMNRTRIIDSKTEQPAALALDLVNKLVYWVDLYLDYVGVVDYQGKNRHTVIQGRQVRHLYGITVFEDYLYATNSDNYNIVRINRFNGTDIHSLIKIENAWGIRIYQKRTQPTVRSHACEVDPYGMPGGCSHICLLSSSYKTRTCRCRTGFNLGSDGRSCKRPKNELFLFYGKGRPGIVRGMDLNTKIADEYMIPIENLVNPRALDFHAETNYIYFADTTSFLIGRQKIDGTERETILKDDLDNVEGIAVDWIGNNLYWTNDGHRKTINVARLEKASQSRKTLLEGEMSHPRGIVVDPVNGWMYWTDWEEDEIDDSVGRIEKAWMDGFNRQIFVTSKMLWPNGLTLDFHTNTLYWCDAYYDHIEKVFLNGTHRKIVYSGRELNHPFGLSHHGNYVFWTDYMNGSIFQLDLITSEVTLLRHERPPLFGLQIYDPRKQQGDNMCRVNNGGCSTLCLAIPGGRVCACADNQLLDENGTTCTFNPGEALPHICKAGEFRCKNRHCIQARWKCDGDDDCLDGSDEDSVNCFNHSCPDDQFKCQNNRCIPKRWLCDGANDCGSNEDESNQTCTARTCQVDQFSCGNGRCIPRAWLCDREDDCGDQTDEMASCEFPTCEPLTQFVCKSGRCISSKWHCDSDDDCGDGSDEVGCVHSCFDNQFRCSSGRCIPGHWACDGDNDCGDFSDEAQINCTKEEIHSPAGCNGNEFQCHPDGNCVPDLWRCDGEKDCEDGSDEKGCNGTIRLCDHKTKFSCWSTGRCINKAWVCDGDIDCEDQSDEDDCDSFLCGPPKHPCANDTSVCLQPEKLCNGKKDCPDGSDEGYLCDECSLNNGGCSNHCSVVPGRGIVCSCPEGLQLNKDNKTCEIVDYCSNHLKCSQVCEQHKHTVKCSCYEGWKLDVDGESCTSVDPFEAFIIFSIRHEIRRIDLHKRDYSLLVPGLRNTIALDFHFNQSLLYWTDVVEDRIYRGKLSESGGVSAIEVVVEHGLATPEGLTVDWIAGNIYWIDSNLDQIEVAKLDGSLRTTLIAGAMEHPRAIALDPRYGILFWTDWDANFPRIESASMSGAGRKTIYKDMKTGAWPNGLTVDHFEKRIVWTDARSDAIYSALYDGTNMIEIIRGHEYLSHPFAVSLYGSEVYWTDWRTNTLSKANKWTGQNVSVIQKTSAQPFDLQIYHPSRQPQAPNPCAANDGKGPCSHMCLINHNRSAACACPHLMKLSSDKKTCYEMKKFLLYARRSEIRGVDIDNPYFNFITAFTVPDIDDVTVIDFDASEERLYWTDIKTQTIKRAFINGTGLETVISRDIQSIRGLAVDWVSRNLYWISSEFDETQINVARLDGSLKTSIIHGIDKPQCLAAHPVRGKLYWTDGNTINMANMDGSNSKILFQNQKEPVGLSIDYVENKLYWISSGNGTINRCNLDGGNLEVIESMKEELTKATALTIMDKKLWWADQNLAQLGTCSKRDGRNPTILRNKTSGVVHMKVYDKEAQQGSNSCQLNNGGCSQLCLPTSETTRTCMCTVGYYLQKNRMSCQGIESFLMYSVHEGIRGIPLEPSDKMDALMPISGTSFAVGIDFHAENDTIYWTDMGFNKISRAKRDQTWKEDIITNGLGRVEGIAVDWIAGNIYWTDHGFNLIEVARLNGSFRYVIISQGLDQPRSIAVHPEKGLLFWTEWGQMPCIGKARLDGSEKVVLVSMGIAWPNGISIDYEENKLYWCDARTDKIERIDLETGGNREMVLSGSNVDMFSVAVFGAYIYWSDRAHANGSVRRGHKNDATETITMRTGLGVNLKEVKIFNRVREKGTNVCARDNGGCKQLCLYRGNSRRTCACAHGYLAEDGVTCLRHEGYLLYSGRTILKSIHLSDETNLNSPIRPYENPRYFKNVIALAFDYNQRRKGTNRIFYSDAHFGNIQLIKDNWEDRQVIVENVGSVEGLAYHRAWDTLYWTSSTTSSITRHTVDQTRPGAFDREAVITMSEDDHPHVLALDECQNLMFWTNWNEQHPSIMRSTLTGKNAQVVVSTDILTPNGLTIDYRAEKLYFSDGSLGKIERCEYDGSQRHVIVKSGPGTFLSLAVYDNYIFWSDWGRRAILRSNKYTGGDTKILRSDIPHQPMGIIAVANDTNSCELSPCALLNGGCHDLCLLTPNGRVNCSCRGDRILLEDNRCVTKNSSCNAYSEFECGNGECIDYQLTCDGIPHCKDKSDEKLLYCENRSCRRGFKPCYNRRCIPHGKLCDGENDCGDNSDELDCKVSTCATVEFRCADGTCIPRSARCNQNIDCADASDEKNCNNTDCTHFYKLGVKTTGFIRCNSTSLCVLPTWICDGSNDCGDYSDELKCPVQNKHKCEENYFSCPSGRCILNTWICDGQKDCEDGRDEFHCDSSCSWNQFACSAQKCISKHWICDGEDDCGDGLDESDSICGAITCAADMFSCQGSRACVPRHWLCDGERDCPDGSDELSTAGCAPNNTCDENAFMCHNKVCIPKQFVCDHDDDCGDGSDESPQCGYRQCGTEEFSCADGRCLLNTQWQCDGDFDCPDHSDEAPLNPKCKSAEQSCNSSFFMCKNGRCIPSGGLCDNKDDCGDGSDERNCHINECLSKKVSGCSQDCQDLPVSYKCKCWPGFQLKDDGKTCVDIDECSSGFPCSQQCINTYGTYKCLCTDGYEIQPDNPNGCKSLSDEEPFLILADHHEIRKISTDGSNYTLLKQGLNNVIAIDFDYREEFIYWIDSSRPNGSRINRMCLNGSDIKVVHNTAVPNALAVDWIGKNLYWSDTEKRIIEVSKLNGLYPTILVSKRLKFPRDLSLDPQAGYLYWIDCCEYPHIGRVGMDGTNQSVVIETKISRPMALTIDYVNRRLYWADENHIEFSNMDGSHRHKVPNQDIPGVIALTLFEDYIYWTDGKTKSLSRAHKTSGADRLSLIYSWHAITDIQVYHSYRQPDVSKHLCMINNGGCSHLCLLAPGKTHTCACPTNFYLAADNRTCLSNCTASQFRCKTDKCIPFWWKCDTVDDCGDGSDEPDDCPEFRCQPGRFQCGTGLCALPAFICDGENDCGDNSDELNCDTHVCLSGQFKCTKNQKCIPVNLRCNGQDDCGDEEDERDCPENSCSPDYFQCKTTKHCISKLWVCDEDPDCADASDEANCDKKTCGPHEFQCKNNNCIPDHWRCDSQNDCSDNSDEENCKPQTCTLKDFLCANGDCVSSRFWCDGDFDCADGSDERNCETSCSKDQFRCSNGQCIPAKWKCDGHEDCKYGEDEKSCEPASPTCSSREYICASDGCISASLKCNGEYDCADGSDEMDCVTECKEDQFRCKNKAHCIPIRWLCDGIHDCVDGSDEENCERGGNICRADEFLCNNSLCKLHFWVCDGEDDCGDNSDEAPDMCVKFLCPSTRPHRCRNNRICLQSEQMCNGIDECGDNSDEDHCGGKLTYKARPCKKDEFACSNKKCIPMDLQCDRLDDCGDGSDEQGCRIAPTEYTCEDNVNPCGDDAYCNQIKTSVFCRCKPGFQRNMKNRQCEDLNECLVFGTCSHQCINVEGSYKCVCDQNFQERNNTCIAEGSEDQVLYIANDTDILGFIYPFNYSGDHQQISHIEHNSRITGMDVYYQRDMIIWSTQFNPGGIFYKRIHGREKRQANSGLICPEFKRPRDIAVDWVAGNIYWTDHSRMHWFSYYTTHWTSLRYSINVGQLNGPNCTRLLTNMAGEPYAIAVNPKRGMMYWTVVGDHSHIEEAAMDGTLRRILVQKNLQRPTGLAVDYFSERIYWADFELSIIGSVLYDGSNSVVSVSSKQGLLHPHRIDIFEDYIYGAGPKNGVFRVQKFGHGSVEYLALNIDKTKGVLISHRYKQLDLPNPCLDLACEFLCLLNPSGATCVCPEGKYLINGTCNDDSLLDDSCKLTCENGGRCILNEKGDLRCHCWPSYSGERCEVNHCSNYCQNGGTCVPSVLGRPTCSCALGFTGPNCGKTVCEDFCQNGGTCIVTAGNQPYCHCQPEYTGDRCQYYVCHHYCVNSESCTIGDDGSVECVCPTRYEGPKCEVDKCVRCHGGHCIINKDSEDIFCNCTNGKIASSCQLCDGYCYNGGTCQLDPETNVPVCLCSTNWSGTQCERPAPKSSKSDHISTRSIAIIVPLVLLVTLITTLVIGLVLCKRKRRTKTIRRQPIINGGINVEIGNPSYNMYEVDHDHNDGGLLDPGFMIDPTKARYIGGGPSAFKLPHTAPPIYLNSDLKGPLTAGPTNYSNPVYAKLYMDGQNCRNSLGSVDERKELLPKKIEIGIRETVA</sequence>
<protein>
    <recommendedName>
        <fullName>Low-density lipoprotein receptor-related protein 1B</fullName>
        <shortName>LRP-1B</shortName>
    </recommendedName>
    <alternativeName>
        <fullName>Low-density lipoprotein receptor-related protein-deleted in tumor</fullName>
        <shortName>LRP-DIT</shortName>
    </alternativeName>
</protein>
<proteinExistence type="evidence at protein level"/>
<dbReference type="EMBL" id="AF176832">
    <property type="protein sequence ID" value="AAF70379.1"/>
    <property type="molecule type" value="mRNA"/>
</dbReference>
<dbReference type="EMBL" id="AF283343">
    <property type="status" value="NOT_ANNOTATED_CDS"/>
    <property type="molecule type" value="Genomic_DNA"/>
</dbReference>
<dbReference type="EMBL" id="AF283342">
    <property type="protein sequence ID" value="AAL38107.1"/>
    <property type="molecule type" value="Genomic_DNA"/>
</dbReference>
<dbReference type="EMBL" id="AF283327">
    <property type="protein sequence ID" value="AAL38107.1"/>
    <property type="status" value="JOINED"/>
    <property type="molecule type" value="Genomic_DNA"/>
</dbReference>
<dbReference type="EMBL" id="AF283328">
    <property type="protein sequence ID" value="AAL38107.1"/>
    <property type="status" value="JOINED"/>
    <property type="molecule type" value="Genomic_DNA"/>
</dbReference>
<dbReference type="EMBL" id="AF283329">
    <property type="protein sequence ID" value="AAL38107.1"/>
    <property type="status" value="JOINED"/>
    <property type="molecule type" value="Genomic_DNA"/>
</dbReference>
<dbReference type="EMBL" id="AF283330">
    <property type="protein sequence ID" value="AAL38107.1"/>
    <property type="status" value="JOINED"/>
    <property type="molecule type" value="Genomic_DNA"/>
</dbReference>
<dbReference type="EMBL" id="AF283331">
    <property type="protein sequence ID" value="AAL38107.1"/>
    <property type="status" value="JOINED"/>
    <property type="molecule type" value="Genomic_DNA"/>
</dbReference>
<dbReference type="EMBL" id="AF283332">
    <property type="protein sequence ID" value="AAL38107.1"/>
    <property type="status" value="JOINED"/>
    <property type="molecule type" value="Genomic_DNA"/>
</dbReference>
<dbReference type="EMBL" id="AF283333">
    <property type="protein sequence ID" value="AAL38107.1"/>
    <property type="status" value="JOINED"/>
    <property type="molecule type" value="Genomic_DNA"/>
</dbReference>
<dbReference type="EMBL" id="AF283334">
    <property type="protein sequence ID" value="AAL38107.1"/>
    <property type="status" value="JOINED"/>
    <property type="molecule type" value="Genomic_DNA"/>
</dbReference>
<dbReference type="EMBL" id="AF283335">
    <property type="protein sequence ID" value="AAL38107.1"/>
    <property type="status" value="JOINED"/>
    <property type="molecule type" value="Genomic_DNA"/>
</dbReference>
<dbReference type="EMBL" id="AF283336">
    <property type="protein sequence ID" value="AAL38107.1"/>
    <property type="status" value="JOINED"/>
    <property type="molecule type" value="Genomic_DNA"/>
</dbReference>
<dbReference type="EMBL" id="AF283337">
    <property type="protein sequence ID" value="AAL38107.1"/>
    <property type="status" value="JOINED"/>
    <property type="molecule type" value="Genomic_DNA"/>
</dbReference>
<dbReference type="EMBL" id="AF283338">
    <property type="protein sequence ID" value="AAL38107.1"/>
    <property type="status" value="JOINED"/>
    <property type="molecule type" value="Genomic_DNA"/>
</dbReference>
<dbReference type="EMBL" id="AF283339">
    <property type="protein sequence ID" value="AAL38107.1"/>
    <property type="status" value="JOINED"/>
    <property type="molecule type" value="Genomic_DNA"/>
</dbReference>
<dbReference type="EMBL" id="AF283340">
    <property type="protein sequence ID" value="AAL38107.1"/>
    <property type="status" value="JOINED"/>
    <property type="molecule type" value="Genomic_DNA"/>
</dbReference>
<dbReference type="EMBL" id="AF283341">
    <property type="protein sequence ID" value="AAL38107.1"/>
    <property type="status" value="JOINED"/>
    <property type="molecule type" value="Genomic_DNA"/>
</dbReference>
<dbReference type="EMBL" id="AF283374">
    <property type="protein sequence ID" value="AAL38108.1"/>
    <property type="molecule type" value="Genomic_DNA"/>
</dbReference>
<dbReference type="EMBL" id="AF283344">
    <property type="protein sequence ID" value="AAL38108.1"/>
    <property type="status" value="JOINED"/>
    <property type="molecule type" value="Genomic_DNA"/>
</dbReference>
<dbReference type="EMBL" id="AF283345">
    <property type="protein sequence ID" value="AAL38108.1"/>
    <property type="status" value="JOINED"/>
    <property type="molecule type" value="Genomic_DNA"/>
</dbReference>
<dbReference type="EMBL" id="AF283346">
    <property type="protein sequence ID" value="AAL38108.1"/>
    <property type="status" value="JOINED"/>
    <property type="molecule type" value="Genomic_DNA"/>
</dbReference>
<dbReference type="EMBL" id="AF283347">
    <property type="protein sequence ID" value="AAL38108.1"/>
    <property type="status" value="JOINED"/>
    <property type="molecule type" value="Genomic_DNA"/>
</dbReference>
<dbReference type="EMBL" id="AF283348">
    <property type="protein sequence ID" value="AAL38108.1"/>
    <property type="status" value="JOINED"/>
    <property type="molecule type" value="Genomic_DNA"/>
</dbReference>
<dbReference type="EMBL" id="AF283349">
    <property type="protein sequence ID" value="AAL38108.1"/>
    <property type="status" value="JOINED"/>
    <property type="molecule type" value="Genomic_DNA"/>
</dbReference>
<dbReference type="EMBL" id="AF283350">
    <property type="protein sequence ID" value="AAL38108.1"/>
    <property type="status" value="JOINED"/>
    <property type="molecule type" value="Genomic_DNA"/>
</dbReference>
<dbReference type="EMBL" id="AF283351">
    <property type="protein sequence ID" value="AAL38108.1"/>
    <property type="status" value="JOINED"/>
    <property type="molecule type" value="Genomic_DNA"/>
</dbReference>
<dbReference type="EMBL" id="AF283352">
    <property type="protein sequence ID" value="AAL38108.1"/>
    <property type="status" value="JOINED"/>
    <property type="molecule type" value="Genomic_DNA"/>
</dbReference>
<dbReference type="EMBL" id="AF283353">
    <property type="protein sequence ID" value="AAL38108.1"/>
    <property type="status" value="JOINED"/>
    <property type="molecule type" value="Genomic_DNA"/>
</dbReference>
<dbReference type="EMBL" id="AF283354">
    <property type="protein sequence ID" value="AAL38108.1"/>
    <property type="status" value="JOINED"/>
    <property type="molecule type" value="Genomic_DNA"/>
</dbReference>
<dbReference type="EMBL" id="AF283355">
    <property type="protein sequence ID" value="AAL38108.1"/>
    <property type="status" value="JOINED"/>
    <property type="molecule type" value="Genomic_DNA"/>
</dbReference>
<dbReference type="EMBL" id="AF283356">
    <property type="protein sequence ID" value="AAL38108.1"/>
    <property type="status" value="JOINED"/>
    <property type="molecule type" value="Genomic_DNA"/>
</dbReference>
<dbReference type="EMBL" id="AF283357">
    <property type="protein sequence ID" value="AAL38108.1"/>
    <property type="status" value="JOINED"/>
    <property type="molecule type" value="Genomic_DNA"/>
</dbReference>
<dbReference type="EMBL" id="AF283358">
    <property type="protein sequence ID" value="AAL38108.1"/>
    <property type="status" value="JOINED"/>
    <property type="molecule type" value="Genomic_DNA"/>
</dbReference>
<dbReference type="EMBL" id="AF283359">
    <property type="protein sequence ID" value="AAL38108.1"/>
    <property type="status" value="JOINED"/>
    <property type="molecule type" value="Genomic_DNA"/>
</dbReference>
<dbReference type="EMBL" id="AF283360">
    <property type="protein sequence ID" value="AAL38108.1"/>
    <property type="status" value="JOINED"/>
    <property type="molecule type" value="Genomic_DNA"/>
</dbReference>
<dbReference type="EMBL" id="AF283361">
    <property type="protein sequence ID" value="AAL38108.1"/>
    <property type="status" value="JOINED"/>
    <property type="molecule type" value="Genomic_DNA"/>
</dbReference>
<dbReference type="EMBL" id="AF283362">
    <property type="protein sequence ID" value="AAL38108.1"/>
    <property type="status" value="JOINED"/>
    <property type="molecule type" value="Genomic_DNA"/>
</dbReference>
<dbReference type="EMBL" id="AF283363">
    <property type="protein sequence ID" value="AAL38108.1"/>
    <property type="status" value="JOINED"/>
    <property type="molecule type" value="Genomic_DNA"/>
</dbReference>
<dbReference type="EMBL" id="AF283364">
    <property type="protein sequence ID" value="AAL38108.1"/>
    <property type="status" value="JOINED"/>
    <property type="molecule type" value="Genomic_DNA"/>
</dbReference>
<dbReference type="EMBL" id="AF283366">
    <property type="protein sequence ID" value="AAL38108.1"/>
    <property type="status" value="JOINED"/>
    <property type="molecule type" value="Genomic_DNA"/>
</dbReference>
<dbReference type="EMBL" id="AF283367">
    <property type="protein sequence ID" value="AAL38108.1"/>
    <property type="status" value="JOINED"/>
    <property type="molecule type" value="Genomic_DNA"/>
</dbReference>
<dbReference type="EMBL" id="AF283368">
    <property type="protein sequence ID" value="AAL38108.1"/>
    <property type="status" value="JOINED"/>
    <property type="molecule type" value="Genomic_DNA"/>
</dbReference>
<dbReference type="EMBL" id="AF283369">
    <property type="protein sequence ID" value="AAL38108.1"/>
    <property type="status" value="JOINED"/>
    <property type="molecule type" value="Genomic_DNA"/>
</dbReference>
<dbReference type="EMBL" id="AF283370">
    <property type="protein sequence ID" value="AAL38108.1"/>
    <property type="status" value="JOINED"/>
    <property type="molecule type" value="Genomic_DNA"/>
</dbReference>
<dbReference type="EMBL" id="AF283371">
    <property type="protein sequence ID" value="AAL38108.1"/>
    <property type="status" value="JOINED"/>
    <property type="molecule type" value="Genomic_DNA"/>
</dbReference>
<dbReference type="EMBL" id="AF283372">
    <property type="protein sequence ID" value="AAL38108.1"/>
    <property type="status" value="JOINED"/>
    <property type="molecule type" value="Genomic_DNA"/>
</dbReference>
<dbReference type="EMBL" id="AF283373">
    <property type="protein sequence ID" value="AAL38108.1"/>
    <property type="status" value="JOINED"/>
    <property type="molecule type" value="Genomic_DNA"/>
</dbReference>
<dbReference type="EMBL" id="AF283408">
    <property type="protein sequence ID" value="AAL38109.1"/>
    <property type="molecule type" value="Genomic_DNA"/>
</dbReference>
<dbReference type="EMBL" id="AF283376">
    <property type="protein sequence ID" value="AAL38109.1"/>
    <property type="status" value="JOINED"/>
    <property type="molecule type" value="Genomic_DNA"/>
</dbReference>
<dbReference type="EMBL" id="AF283377">
    <property type="protein sequence ID" value="AAL38109.1"/>
    <property type="status" value="JOINED"/>
    <property type="molecule type" value="Genomic_DNA"/>
</dbReference>
<dbReference type="EMBL" id="AF283378">
    <property type="protein sequence ID" value="AAL38109.1"/>
    <property type="status" value="JOINED"/>
    <property type="molecule type" value="Genomic_DNA"/>
</dbReference>
<dbReference type="EMBL" id="AF283379">
    <property type="protein sequence ID" value="AAL38109.1"/>
    <property type="status" value="JOINED"/>
    <property type="molecule type" value="Genomic_DNA"/>
</dbReference>
<dbReference type="EMBL" id="AF283380">
    <property type="protein sequence ID" value="AAL38109.1"/>
    <property type="status" value="JOINED"/>
    <property type="molecule type" value="Genomic_DNA"/>
</dbReference>
<dbReference type="EMBL" id="AF283381">
    <property type="protein sequence ID" value="AAL38109.1"/>
    <property type="status" value="JOINED"/>
    <property type="molecule type" value="Genomic_DNA"/>
</dbReference>
<dbReference type="EMBL" id="AF283382">
    <property type="protein sequence ID" value="AAL38109.1"/>
    <property type="status" value="JOINED"/>
    <property type="molecule type" value="Genomic_DNA"/>
</dbReference>
<dbReference type="EMBL" id="AF283383">
    <property type="protein sequence ID" value="AAL38109.1"/>
    <property type="status" value="JOINED"/>
    <property type="molecule type" value="Genomic_DNA"/>
</dbReference>
<dbReference type="EMBL" id="AF283384">
    <property type="protein sequence ID" value="AAL38109.1"/>
    <property type="status" value="JOINED"/>
    <property type="molecule type" value="Genomic_DNA"/>
</dbReference>
<dbReference type="EMBL" id="AF283385">
    <property type="protein sequence ID" value="AAL38109.1"/>
    <property type="status" value="JOINED"/>
    <property type="molecule type" value="Genomic_DNA"/>
</dbReference>
<dbReference type="EMBL" id="AF283386">
    <property type="protein sequence ID" value="AAL38109.1"/>
    <property type="status" value="JOINED"/>
    <property type="molecule type" value="Genomic_DNA"/>
</dbReference>
<dbReference type="EMBL" id="AF283387">
    <property type="protein sequence ID" value="AAL38109.1"/>
    <property type="status" value="JOINED"/>
    <property type="molecule type" value="Genomic_DNA"/>
</dbReference>
<dbReference type="EMBL" id="AF283388">
    <property type="protein sequence ID" value="AAL38109.1"/>
    <property type="status" value="JOINED"/>
    <property type="molecule type" value="Genomic_DNA"/>
</dbReference>
<dbReference type="EMBL" id="AF283389">
    <property type="protein sequence ID" value="AAL38109.1"/>
    <property type="status" value="JOINED"/>
    <property type="molecule type" value="Genomic_DNA"/>
</dbReference>
<dbReference type="EMBL" id="AF283390">
    <property type="protein sequence ID" value="AAL38109.1"/>
    <property type="status" value="JOINED"/>
    <property type="molecule type" value="Genomic_DNA"/>
</dbReference>
<dbReference type="EMBL" id="AF283391">
    <property type="protein sequence ID" value="AAL38109.1"/>
    <property type="status" value="JOINED"/>
    <property type="molecule type" value="Genomic_DNA"/>
</dbReference>
<dbReference type="EMBL" id="AF283392">
    <property type="protein sequence ID" value="AAL38109.1"/>
    <property type="status" value="JOINED"/>
    <property type="molecule type" value="Genomic_DNA"/>
</dbReference>
<dbReference type="EMBL" id="AF283393">
    <property type="protein sequence ID" value="AAL38109.1"/>
    <property type="status" value="JOINED"/>
    <property type="molecule type" value="Genomic_DNA"/>
</dbReference>
<dbReference type="EMBL" id="AF283394">
    <property type="protein sequence ID" value="AAL38109.1"/>
    <property type="status" value="JOINED"/>
    <property type="molecule type" value="Genomic_DNA"/>
</dbReference>
<dbReference type="EMBL" id="AF283395">
    <property type="protein sequence ID" value="AAL38109.1"/>
    <property type="status" value="JOINED"/>
    <property type="molecule type" value="Genomic_DNA"/>
</dbReference>
<dbReference type="EMBL" id="AF283396">
    <property type="protein sequence ID" value="AAL38109.1"/>
    <property type="status" value="JOINED"/>
    <property type="molecule type" value="Genomic_DNA"/>
</dbReference>
<dbReference type="EMBL" id="AF283397">
    <property type="protein sequence ID" value="AAL38109.1"/>
    <property type="status" value="JOINED"/>
    <property type="molecule type" value="Genomic_DNA"/>
</dbReference>
<dbReference type="EMBL" id="AF283398">
    <property type="protein sequence ID" value="AAL38109.1"/>
    <property type="status" value="JOINED"/>
    <property type="molecule type" value="Genomic_DNA"/>
</dbReference>
<dbReference type="EMBL" id="AF283399">
    <property type="protein sequence ID" value="AAL38109.1"/>
    <property type="status" value="JOINED"/>
    <property type="molecule type" value="Genomic_DNA"/>
</dbReference>
<dbReference type="EMBL" id="AF283400">
    <property type="protein sequence ID" value="AAL38109.1"/>
    <property type="status" value="JOINED"/>
    <property type="molecule type" value="Genomic_DNA"/>
</dbReference>
<dbReference type="EMBL" id="AF283401">
    <property type="protein sequence ID" value="AAL38109.1"/>
    <property type="status" value="JOINED"/>
    <property type="molecule type" value="Genomic_DNA"/>
</dbReference>
<dbReference type="EMBL" id="AF283402">
    <property type="protein sequence ID" value="AAL38109.1"/>
    <property type="status" value="JOINED"/>
    <property type="molecule type" value="Genomic_DNA"/>
</dbReference>
<dbReference type="EMBL" id="AF283403">
    <property type="protein sequence ID" value="AAL38109.1"/>
    <property type="status" value="JOINED"/>
    <property type="molecule type" value="Genomic_DNA"/>
</dbReference>
<dbReference type="EMBL" id="AF283404">
    <property type="protein sequence ID" value="AAL38109.1"/>
    <property type="status" value="JOINED"/>
    <property type="molecule type" value="Genomic_DNA"/>
</dbReference>
<dbReference type="EMBL" id="AF283405">
    <property type="protein sequence ID" value="AAL38109.1"/>
    <property type="status" value="JOINED"/>
    <property type="molecule type" value="Genomic_DNA"/>
</dbReference>
<dbReference type="EMBL" id="AF283406">
    <property type="protein sequence ID" value="AAL38109.1"/>
    <property type="status" value="JOINED"/>
    <property type="molecule type" value="Genomic_DNA"/>
</dbReference>
<dbReference type="EMBL" id="AF283407">
    <property type="protein sequence ID" value="AAL38109.1"/>
    <property type="status" value="JOINED"/>
    <property type="molecule type" value="Genomic_DNA"/>
</dbReference>
<dbReference type="CCDS" id="CCDS2182.1"/>
<dbReference type="RefSeq" id="NP_061027.2">
    <property type="nucleotide sequence ID" value="NM_018557.3"/>
</dbReference>
<dbReference type="SMR" id="Q9NZR2"/>
<dbReference type="BioGRID" id="119750">
    <property type="interactions" value="75"/>
</dbReference>
<dbReference type="FunCoup" id="Q9NZR2">
    <property type="interactions" value="553"/>
</dbReference>
<dbReference type="IntAct" id="Q9NZR2">
    <property type="interactions" value="55"/>
</dbReference>
<dbReference type="STRING" id="9606.ENSP00000374135"/>
<dbReference type="GlyConnect" id="1466">
    <property type="glycosylation" value="4 N-Linked glycans (1 site)"/>
</dbReference>
<dbReference type="GlyCosmos" id="Q9NZR2">
    <property type="glycosylation" value="46 sites, 4 glycans"/>
</dbReference>
<dbReference type="GlyGen" id="Q9NZR2">
    <property type="glycosylation" value="48 sites, 14 N-linked glycans (24 sites), 2 O-linked glycans (2 sites)"/>
</dbReference>
<dbReference type="iPTMnet" id="Q9NZR2"/>
<dbReference type="PhosphoSitePlus" id="Q9NZR2"/>
<dbReference type="BioMuta" id="LRP1B"/>
<dbReference type="DMDM" id="57015418"/>
<dbReference type="MassIVE" id="Q9NZR2"/>
<dbReference type="PaxDb" id="9606-ENSP00000374135"/>
<dbReference type="PeptideAtlas" id="Q9NZR2"/>
<dbReference type="ProteomicsDB" id="83492"/>
<dbReference type="Antibodypedia" id="33599">
    <property type="antibodies" value="59 antibodies from 18 providers"/>
</dbReference>
<dbReference type="DNASU" id="53353"/>
<dbReference type="Ensembl" id="ENST00000389484.8">
    <property type="protein sequence ID" value="ENSP00000374135.3"/>
    <property type="gene ID" value="ENSG00000168702.18"/>
</dbReference>
<dbReference type="GeneID" id="53353"/>
<dbReference type="KEGG" id="hsa:53353"/>
<dbReference type="MANE-Select" id="ENST00000389484.8">
    <property type="protein sequence ID" value="ENSP00000374135.3"/>
    <property type="RefSeq nucleotide sequence ID" value="NM_018557.3"/>
    <property type="RefSeq protein sequence ID" value="NP_061027.2"/>
</dbReference>
<dbReference type="UCSC" id="uc002tvj.2">
    <property type="organism name" value="human"/>
</dbReference>
<dbReference type="AGR" id="HGNC:6693"/>
<dbReference type="CTD" id="53353"/>
<dbReference type="DisGeNET" id="53353"/>
<dbReference type="GeneCards" id="LRP1B"/>
<dbReference type="HGNC" id="HGNC:6693">
    <property type="gene designation" value="LRP1B"/>
</dbReference>
<dbReference type="HPA" id="ENSG00000168702">
    <property type="expression patterns" value="Tissue enhanced (brain, thyroid gland)"/>
</dbReference>
<dbReference type="MalaCards" id="LRP1B"/>
<dbReference type="MIM" id="608766">
    <property type="type" value="gene"/>
</dbReference>
<dbReference type="neXtProt" id="NX_Q9NZR2"/>
<dbReference type="OpenTargets" id="ENSG00000168702"/>
<dbReference type="PharmGKB" id="PA30451"/>
<dbReference type="VEuPathDB" id="HostDB:ENSG00000168702"/>
<dbReference type="eggNOG" id="KOG1215">
    <property type="taxonomic scope" value="Eukaryota"/>
</dbReference>
<dbReference type="GeneTree" id="ENSGT00940000157521"/>
<dbReference type="HOGENOM" id="CLU_000085_2_1_1"/>
<dbReference type="InParanoid" id="Q9NZR2"/>
<dbReference type="OMA" id="GRDEFHC"/>
<dbReference type="OrthoDB" id="10066840at2759"/>
<dbReference type="PAN-GO" id="Q9NZR2">
    <property type="GO annotations" value="3 GO annotations based on evolutionary models"/>
</dbReference>
<dbReference type="PhylomeDB" id="Q9NZR2"/>
<dbReference type="TreeFam" id="TF315253"/>
<dbReference type="PathwayCommons" id="Q9NZR2"/>
<dbReference type="SignaLink" id="Q9NZR2"/>
<dbReference type="SIGNOR" id="Q9NZR2"/>
<dbReference type="BioGRID-ORCS" id="53353">
    <property type="hits" value="24 hits in 1154 CRISPR screens"/>
</dbReference>
<dbReference type="ChiTaRS" id="LRP1B">
    <property type="organism name" value="human"/>
</dbReference>
<dbReference type="GeneWiki" id="LRP1B"/>
<dbReference type="GenomeRNAi" id="53353"/>
<dbReference type="Pharos" id="Q9NZR2">
    <property type="development level" value="Tbio"/>
</dbReference>
<dbReference type="PRO" id="PR:Q9NZR2"/>
<dbReference type="Proteomes" id="UP000005640">
    <property type="component" value="Chromosome 2"/>
</dbReference>
<dbReference type="RNAct" id="Q9NZR2">
    <property type="molecule type" value="protein"/>
</dbReference>
<dbReference type="Bgee" id="ENSG00000168702">
    <property type="expression patterns" value="Expressed in endothelial cell and 136 other cell types or tissues"/>
</dbReference>
<dbReference type="ExpressionAtlas" id="Q9NZR2">
    <property type="expression patterns" value="baseline and differential"/>
</dbReference>
<dbReference type="GO" id="GO:0005886">
    <property type="term" value="C:plasma membrane"/>
    <property type="evidence" value="ECO:0000318"/>
    <property type="project" value="GO_Central"/>
</dbReference>
<dbReference type="GO" id="GO:0043235">
    <property type="term" value="C:receptor complex"/>
    <property type="evidence" value="ECO:0000314"/>
    <property type="project" value="MGI"/>
</dbReference>
<dbReference type="GO" id="GO:0005509">
    <property type="term" value="F:calcium ion binding"/>
    <property type="evidence" value="ECO:0007669"/>
    <property type="project" value="InterPro"/>
</dbReference>
<dbReference type="GO" id="GO:0005041">
    <property type="term" value="F:low-density lipoprotein particle receptor activity"/>
    <property type="evidence" value="ECO:0000318"/>
    <property type="project" value="GO_Central"/>
</dbReference>
<dbReference type="GO" id="GO:0015031">
    <property type="term" value="P:protein transport"/>
    <property type="evidence" value="ECO:0000304"/>
    <property type="project" value="ProtInc"/>
</dbReference>
<dbReference type="GO" id="GO:0006898">
    <property type="term" value="P:receptor-mediated endocytosis"/>
    <property type="evidence" value="ECO:0000304"/>
    <property type="project" value="ProtInc"/>
</dbReference>
<dbReference type="CDD" id="cd00054">
    <property type="entry name" value="EGF_CA"/>
    <property type="match status" value="4"/>
</dbReference>
<dbReference type="CDD" id="cd00112">
    <property type="entry name" value="LDLa"/>
    <property type="match status" value="28"/>
</dbReference>
<dbReference type="FunFam" id="4.10.400.10:FF:000022">
    <property type="entry name" value="LDL receptor related protein 1"/>
    <property type="match status" value="1"/>
</dbReference>
<dbReference type="FunFam" id="2.10.25.10:FF:000504">
    <property type="entry name" value="LDL receptor related protein 1B"/>
    <property type="match status" value="1"/>
</dbReference>
<dbReference type="FunFam" id="2.120.10.30:FF:000012">
    <property type="entry name" value="Low density lipoprotein receptor-related protein 1"/>
    <property type="match status" value="1"/>
</dbReference>
<dbReference type="FunFam" id="4.10.400.10:FF:000007">
    <property type="entry name" value="Low density lipoprotein receptor-related protein 1"/>
    <property type="match status" value="1"/>
</dbReference>
<dbReference type="FunFam" id="4.10.400.10:FF:000008">
    <property type="entry name" value="Low density lipoprotein receptor-related protein 1"/>
    <property type="match status" value="1"/>
</dbReference>
<dbReference type="FunFam" id="2.120.10.30:FF:000010">
    <property type="entry name" value="Low density lipoprotein receptor-related protein 1B"/>
    <property type="match status" value="1"/>
</dbReference>
<dbReference type="FunFam" id="2.10.25.10:FF:000009">
    <property type="entry name" value="Low-density lipoprotein receptor isoform 1"/>
    <property type="match status" value="2"/>
</dbReference>
<dbReference type="FunFam" id="4.10.400.10:FF:000024">
    <property type="entry name" value="Low-density lipoprotein RecePtor related"/>
    <property type="match status" value="1"/>
</dbReference>
<dbReference type="FunFam" id="2.10.25.10:FF:000129">
    <property type="entry name" value="Low-density lipoprotein receptor-related protein 1"/>
    <property type="match status" value="1"/>
</dbReference>
<dbReference type="FunFam" id="2.10.25.10:FF:000144">
    <property type="entry name" value="Low-density lipoprotein receptor-related protein 1"/>
    <property type="match status" value="1"/>
</dbReference>
<dbReference type="FunFam" id="2.10.25.10:FF:000505">
    <property type="entry name" value="Low-density lipoprotein receptor-related protein 1"/>
    <property type="match status" value="1"/>
</dbReference>
<dbReference type="FunFam" id="2.120.10.30:FF:000014">
    <property type="entry name" value="Low-density lipoprotein receptor-related protein 1"/>
    <property type="match status" value="1"/>
</dbReference>
<dbReference type="FunFam" id="2.120.10.30:FF:000015">
    <property type="entry name" value="Low-density lipoprotein receptor-related protein 1"/>
    <property type="match status" value="1"/>
</dbReference>
<dbReference type="FunFam" id="2.120.10.30:FF:000018">
    <property type="entry name" value="Low-density lipoprotein receptor-related protein 1"/>
    <property type="match status" value="1"/>
</dbReference>
<dbReference type="FunFam" id="2.120.10.30:FF:000019">
    <property type="entry name" value="Low-density lipoprotein receptor-related protein 1"/>
    <property type="match status" value="1"/>
</dbReference>
<dbReference type="FunFam" id="4.10.400.10:FF:000001">
    <property type="entry name" value="Low-density lipoprotein receptor-related protein 1"/>
    <property type="match status" value="1"/>
</dbReference>
<dbReference type="FunFam" id="4.10.400.10:FF:000002">
    <property type="entry name" value="Low-density lipoprotein receptor-related protein 1"/>
    <property type="match status" value="1"/>
</dbReference>
<dbReference type="FunFam" id="4.10.400.10:FF:000004">
    <property type="entry name" value="Low-density lipoprotein receptor-related protein 1"/>
    <property type="match status" value="2"/>
</dbReference>
<dbReference type="FunFam" id="4.10.400.10:FF:000009">
    <property type="entry name" value="Low-density lipoprotein receptor-related protein 1"/>
    <property type="match status" value="1"/>
</dbReference>
<dbReference type="FunFam" id="4.10.400.10:FF:000010">
    <property type="entry name" value="Low-density lipoprotein receptor-related protein 1"/>
    <property type="match status" value="1"/>
</dbReference>
<dbReference type="FunFam" id="4.10.400.10:FF:000012">
    <property type="entry name" value="Low-density lipoprotein receptor-related protein 1"/>
    <property type="match status" value="1"/>
</dbReference>
<dbReference type="FunFam" id="4.10.400.10:FF:000015">
    <property type="entry name" value="Low-density lipoprotein receptor-related protein 1"/>
    <property type="match status" value="2"/>
</dbReference>
<dbReference type="FunFam" id="4.10.400.10:FF:000018">
    <property type="entry name" value="Low-density lipoprotein receptor-related protein 1"/>
    <property type="match status" value="1"/>
</dbReference>
<dbReference type="FunFam" id="2.10.25.10:FF:000072">
    <property type="entry name" value="Low-density lipoprotein receptor-related protein 1B"/>
    <property type="match status" value="1"/>
</dbReference>
<dbReference type="FunFam" id="2.10.25.10:FF:000498">
    <property type="entry name" value="Low-density lipoprotein receptor-related protein 1B"/>
    <property type="match status" value="1"/>
</dbReference>
<dbReference type="FunFam" id="4.10.400.10:FF:000061">
    <property type="entry name" value="Low-density lipoprotein receptor-related protein 1B"/>
    <property type="match status" value="1"/>
</dbReference>
<dbReference type="FunFam" id="4.10.400.10:FF:000068">
    <property type="entry name" value="Low-density lipoprotein receptor-related protein 1B"/>
    <property type="match status" value="1"/>
</dbReference>
<dbReference type="FunFam" id="4.10.400.10:FF:000073">
    <property type="entry name" value="Low-density lipoprotein receptor-related protein 1B"/>
    <property type="match status" value="1"/>
</dbReference>
<dbReference type="FunFam" id="4.10.400.10:FF:000080">
    <property type="entry name" value="Low-density lipoprotein receptor-related protein 1B"/>
    <property type="match status" value="1"/>
</dbReference>
<dbReference type="FunFam" id="4.10.400.10:FF:000081">
    <property type="entry name" value="Low-density lipoprotein receptor-related protein 1B"/>
    <property type="match status" value="1"/>
</dbReference>
<dbReference type="FunFam" id="4.10.400.10:FF:000101">
    <property type="entry name" value="Low-density lipoprotein receptor-related protein 1B"/>
    <property type="match status" value="1"/>
</dbReference>
<dbReference type="FunFam" id="4.10.400.10:FF:000102">
    <property type="entry name" value="Low-density lipoprotein receptor-related protein 1B"/>
    <property type="match status" value="1"/>
</dbReference>
<dbReference type="FunFam" id="4.10.400.10:FF:000110">
    <property type="entry name" value="Low-density lipoprotein receptor-related protein 1B"/>
    <property type="match status" value="1"/>
</dbReference>
<dbReference type="FunFam" id="4.10.400.10:FF:000005">
    <property type="entry name" value="low-density lipoprotein receptor-related protein 1B"/>
    <property type="match status" value="1"/>
</dbReference>
<dbReference type="FunFam" id="4.10.400.10:FF:000070">
    <property type="entry name" value="low-density lipoprotein receptor-related protein 1B"/>
    <property type="match status" value="1"/>
</dbReference>
<dbReference type="FunFam" id="4.10.400.10:FF:000107">
    <property type="entry name" value="low-density lipoprotein receptor-related protein 1B"/>
    <property type="match status" value="1"/>
</dbReference>
<dbReference type="FunFam" id="4.10.400.10:FF:000123">
    <property type="entry name" value="low-density lipoprotein receptor-related protein 1B"/>
    <property type="match status" value="1"/>
</dbReference>
<dbReference type="FunFam" id="4.10.400.10:FF:000148">
    <property type="entry name" value="low-density lipoprotein receptor-related protein 1B"/>
    <property type="match status" value="1"/>
</dbReference>
<dbReference type="FunFam" id="2.10.25.10:FF:000088">
    <property type="entry name" value="Prolow-density lipoprotein receptor-related protein 1"/>
    <property type="match status" value="1"/>
</dbReference>
<dbReference type="FunFam" id="2.120.10.30:FF:000020">
    <property type="entry name" value="Prolow-density lipoprotein receptor-related protein 1"/>
    <property type="match status" value="1"/>
</dbReference>
<dbReference type="FunFam" id="4.10.400.10:FF:000028">
    <property type="entry name" value="prolow-density lipoprotein receptor-related protein 1"/>
    <property type="match status" value="1"/>
</dbReference>
<dbReference type="FunFam" id="4.10.400.10:FF:000029">
    <property type="entry name" value="prolow-density lipoprotein receptor-related protein 1"/>
    <property type="match status" value="1"/>
</dbReference>
<dbReference type="FunFam" id="2.120.10.30:FF:000009">
    <property type="entry name" value="Putative low-density lipoprotein receptor-related protein 1B"/>
    <property type="match status" value="1"/>
</dbReference>
<dbReference type="FunFam" id="4.10.400.10:FF:000065">
    <property type="entry name" value="Transmembrane protease serine 7"/>
    <property type="match status" value="1"/>
</dbReference>
<dbReference type="Gene3D" id="2.10.25.10">
    <property type="entry name" value="Laminin"/>
    <property type="match status" value="13"/>
</dbReference>
<dbReference type="Gene3D" id="4.10.400.10">
    <property type="entry name" value="Low-density Lipoprotein Receptor"/>
    <property type="match status" value="32"/>
</dbReference>
<dbReference type="Gene3D" id="2.120.10.30">
    <property type="entry name" value="TolB, C-terminal domain"/>
    <property type="match status" value="8"/>
</dbReference>
<dbReference type="InterPro" id="IPR011042">
    <property type="entry name" value="6-blade_b-propeller_TolB-like"/>
</dbReference>
<dbReference type="InterPro" id="IPR026823">
    <property type="entry name" value="cEGF"/>
</dbReference>
<dbReference type="InterPro" id="IPR001881">
    <property type="entry name" value="EGF-like_Ca-bd_dom"/>
</dbReference>
<dbReference type="InterPro" id="IPR000742">
    <property type="entry name" value="EGF-like_dom"/>
</dbReference>
<dbReference type="InterPro" id="IPR000152">
    <property type="entry name" value="EGF-type_Asp/Asn_hydroxyl_site"/>
</dbReference>
<dbReference type="InterPro" id="IPR018097">
    <property type="entry name" value="EGF_Ca-bd_CS"/>
</dbReference>
<dbReference type="InterPro" id="IPR009030">
    <property type="entry name" value="Growth_fac_rcpt_cys_sf"/>
</dbReference>
<dbReference type="InterPro" id="IPR036055">
    <property type="entry name" value="LDL_receptor-like_sf"/>
</dbReference>
<dbReference type="InterPro" id="IPR051221">
    <property type="entry name" value="LDLR-related"/>
</dbReference>
<dbReference type="InterPro" id="IPR023415">
    <property type="entry name" value="LDLR_class-A_CS"/>
</dbReference>
<dbReference type="InterPro" id="IPR000033">
    <property type="entry name" value="LDLR_classB_rpt"/>
</dbReference>
<dbReference type="InterPro" id="IPR002172">
    <property type="entry name" value="LDrepeatLR_classA_rpt"/>
</dbReference>
<dbReference type="InterPro" id="IPR032485">
    <property type="entry name" value="LRP1-like_beta_prop"/>
</dbReference>
<dbReference type="InterPro" id="IPR049883">
    <property type="entry name" value="NOTCH1_EGF-like"/>
</dbReference>
<dbReference type="PANTHER" id="PTHR22722:SF15">
    <property type="entry name" value="LOW-DENSITY LIPOPROTEIN RECEPTOR-RELATED"/>
    <property type="match status" value="1"/>
</dbReference>
<dbReference type="PANTHER" id="PTHR22722">
    <property type="entry name" value="LOW-DENSITY LIPOPROTEIN RECEPTOR-RELATED PROTEIN 2-RELATED"/>
    <property type="match status" value="1"/>
</dbReference>
<dbReference type="Pfam" id="PF12662">
    <property type="entry name" value="cEGF"/>
    <property type="match status" value="1"/>
</dbReference>
<dbReference type="Pfam" id="PF16472">
    <property type="entry name" value="DUF5050"/>
    <property type="match status" value="1"/>
</dbReference>
<dbReference type="Pfam" id="PF00008">
    <property type="entry name" value="EGF"/>
    <property type="match status" value="1"/>
</dbReference>
<dbReference type="Pfam" id="PF07645">
    <property type="entry name" value="EGF_CA"/>
    <property type="match status" value="2"/>
</dbReference>
<dbReference type="Pfam" id="PF14670">
    <property type="entry name" value="FXa_inhibition"/>
    <property type="match status" value="4"/>
</dbReference>
<dbReference type="Pfam" id="PF00057">
    <property type="entry name" value="Ldl_recept_a"/>
    <property type="match status" value="30"/>
</dbReference>
<dbReference type="Pfam" id="PF00058">
    <property type="entry name" value="Ldl_recept_b"/>
    <property type="match status" value="11"/>
</dbReference>
<dbReference type="PRINTS" id="PR00261">
    <property type="entry name" value="LDLRECEPTOR"/>
</dbReference>
<dbReference type="SMART" id="SM00181">
    <property type="entry name" value="EGF"/>
    <property type="match status" value="25"/>
</dbReference>
<dbReference type="SMART" id="SM00179">
    <property type="entry name" value="EGF_CA"/>
    <property type="match status" value="6"/>
</dbReference>
<dbReference type="SMART" id="SM00192">
    <property type="entry name" value="LDLa"/>
    <property type="match status" value="32"/>
</dbReference>
<dbReference type="SMART" id="SM00135">
    <property type="entry name" value="LY"/>
    <property type="match status" value="37"/>
</dbReference>
<dbReference type="SUPFAM" id="SSF57196">
    <property type="entry name" value="EGF/Laminin"/>
    <property type="match status" value="8"/>
</dbReference>
<dbReference type="SUPFAM" id="SSF57184">
    <property type="entry name" value="Growth factor receptor domain"/>
    <property type="match status" value="3"/>
</dbReference>
<dbReference type="SUPFAM" id="SSF57424">
    <property type="entry name" value="LDL receptor-like module"/>
    <property type="match status" value="32"/>
</dbReference>
<dbReference type="SUPFAM" id="SSF63825">
    <property type="entry name" value="YWTD domain"/>
    <property type="match status" value="8"/>
</dbReference>
<dbReference type="PROSITE" id="PS00010">
    <property type="entry name" value="ASX_HYDROXYL"/>
    <property type="match status" value="4"/>
</dbReference>
<dbReference type="PROSITE" id="PS00022">
    <property type="entry name" value="EGF_1"/>
    <property type="match status" value="5"/>
</dbReference>
<dbReference type="PROSITE" id="PS01186">
    <property type="entry name" value="EGF_2"/>
    <property type="match status" value="9"/>
</dbReference>
<dbReference type="PROSITE" id="PS50026">
    <property type="entry name" value="EGF_3"/>
    <property type="match status" value="9"/>
</dbReference>
<dbReference type="PROSITE" id="PS01187">
    <property type="entry name" value="EGF_CA"/>
    <property type="match status" value="3"/>
</dbReference>
<dbReference type="PROSITE" id="PS01209">
    <property type="entry name" value="LDLRA_1"/>
    <property type="match status" value="27"/>
</dbReference>
<dbReference type="PROSITE" id="PS50068">
    <property type="entry name" value="LDLRA_2"/>
    <property type="match status" value="32"/>
</dbReference>
<dbReference type="PROSITE" id="PS51120">
    <property type="entry name" value="LDLRB"/>
    <property type="match status" value="37"/>
</dbReference>